<dbReference type="EMBL" id="AB024031">
    <property type="protein sequence ID" value="BAB09399.1"/>
    <property type="molecule type" value="Genomic_DNA"/>
</dbReference>
<dbReference type="EMBL" id="CP002688">
    <property type="protein sequence ID" value="AED95921.1"/>
    <property type="molecule type" value="Genomic_DNA"/>
</dbReference>
<dbReference type="RefSeq" id="NP_199839.1">
    <property type="nucleotide sequence ID" value="NM_124407.2"/>
</dbReference>
<dbReference type="SMR" id="Q9FGR7"/>
<dbReference type="FunCoup" id="Q9FGR7">
    <property type="interactions" value="1901"/>
</dbReference>
<dbReference type="STRING" id="3702.Q9FGR7"/>
<dbReference type="iPTMnet" id="Q9FGR7"/>
<dbReference type="PaxDb" id="3702-AT5G50280.1"/>
<dbReference type="ProteomicsDB" id="249307"/>
<dbReference type="EnsemblPlants" id="AT5G50280.1">
    <property type="protein sequence ID" value="AT5G50280.1"/>
    <property type="gene ID" value="AT5G50280"/>
</dbReference>
<dbReference type="GeneID" id="835093"/>
<dbReference type="Gramene" id="AT5G50280.1">
    <property type="protein sequence ID" value="AT5G50280.1"/>
    <property type="gene ID" value="AT5G50280"/>
</dbReference>
<dbReference type="KEGG" id="ath:AT5G50280"/>
<dbReference type="Araport" id="AT5G50280"/>
<dbReference type="TAIR" id="AT5G50280">
    <property type="gene designation" value="EMB1006"/>
</dbReference>
<dbReference type="eggNOG" id="KOG4197">
    <property type="taxonomic scope" value="Eukaryota"/>
</dbReference>
<dbReference type="HOGENOM" id="CLU_002706_49_0_1"/>
<dbReference type="InParanoid" id="Q9FGR7"/>
<dbReference type="OMA" id="FFEWMGL"/>
<dbReference type="PhylomeDB" id="Q9FGR7"/>
<dbReference type="PRO" id="PR:Q9FGR7"/>
<dbReference type="Proteomes" id="UP000006548">
    <property type="component" value="Chromosome 5"/>
</dbReference>
<dbReference type="ExpressionAtlas" id="Q9FGR7">
    <property type="expression patterns" value="baseline and differential"/>
</dbReference>
<dbReference type="GO" id="GO:0009507">
    <property type="term" value="C:chloroplast"/>
    <property type="evidence" value="ECO:0000314"/>
    <property type="project" value="TAIR"/>
</dbReference>
<dbReference type="Gene3D" id="1.25.40.10">
    <property type="entry name" value="Tetratricopeptide repeat domain"/>
    <property type="match status" value="3"/>
</dbReference>
<dbReference type="InterPro" id="IPR002885">
    <property type="entry name" value="Pentatricopeptide_rpt"/>
</dbReference>
<dbReference type="InterPro" id="IPR011990">
    <property type="entry name" value="TPR-like_helical_dom_sf"/>
</dbReference>
<dbReference type="NCBIfam" id="TIGR00756">
    <property type="entry name" value="PPR"/>
    <property type="match status" value="10"/>
</dbReference>
<dbReference type="PANTHER" id="PTHR47447">
    <property type="entry name" value="OS03G0856100 PROTEIN"/>
    <property type="match status" value="1"/>
</dbReference>
<dbReference type="PANTHER" id="PTHR47447:SF17">
    <property type="entry name" value="OS12G0638900 PROTEIN"/>
    <property type="match status" value="1"/>
</dbReference>
<dbReference type="Pfam" id="PF01535">
    <property type="entry name" value="PPR"/>
    <property type="match status" value="1"/>
</dbReference>
<dbReference type="Pfam" id="PF13041">
    <property type="entry name" value="PPR_2"/>
    <property type="match status" value="3"/>
</dbReference>
<dbReference type="Pfam" id="PF13812">
    <property type="entry name" value="PPR_3"/>
    <property type="match status" value="2"/>
</dbReference>
<dbReference type="PROSITE" id="PS51375">
    <property type="entry name" value="PPR"/>
    <property type="match status" value="11"/>
</dbReference>
<reference key="1">
    <citation type="journal article" date="2000" name="DNA Res.">
        <title>Structural analysis of Arabidopsis thaliana chromosome 5. X. Sequence features of the regions of 3,076,755 bp covered by sixty P1 and TAC clones.</title>
        <authorList>
            <person name="Sato S."/>
            <person name="Nakamura Y."/>
            <person name="Kaneko T."/>
            <person name="Katoh T."/>
            <person name="Asamizu E."/>
            <person name="Kotani H."/>
            <person name="Tabata S."/>
        </authorList>
    </citation>
    <scope>NUCLEOTIDE SEQUENCE [LARGE SCALE GENOMIC DNA]</scope>
    <source>
        <strain>cv. Columbia</strain>
    </source>
</reference>
<reference key="2">
    <citation type="journal article" date="2017" name="Plant J.">
        <title>Araport11: a complete reannotation of the Arabidopsis thaliana reference genome.</title>
        <authorList>
            <person name="Cheng C.Y."/>
            <person name="Krishnakumar V."/>
            <person name="Chan A.P."/>
            <person name="Thibaud-Nissen F."/>
            <person name="Schobel S."/>
            <person name="Town C.D."/>
        </authorList>
    </citation>
    <scope>GENOME REANNOTATION</scope>
    <source>
        <strain>cv. Columbia</strain>
    </source>
</reference>
<reference key="3">
    <citation type="journal article" date="2004" name="Plant Cell">
        <title>Genome-wide analysis of Arabidopsis pentatricopeptide repeat proteins reveals their essential role in organelle biogenesis.</title>
        <authorList>
            <person name="Lurin C."/>
            <person name="Andres C."/>
            <person name="Aubourg S."/>
            <person name="Bellaoui M."/>
            <person name="Bitton F."/>
            <person name="Bruyere C."/>
            <person name="Caboche M."/>
            <person name="Debast C."/>
            <person name="Gualberto J."/>
            <person name="Hoffmann B."/>
            <person name="Lecharny A."/>
            <person name="Le Ret M."/>
            <person name="Martin-Magniette M.-L."/>
            <person name="Mireau H."/>
            <person name="Peeters N."/>
            <person name="Renou J.-P."/>
            <person name="Szurek B."/>
            <person name="Taconnat L."/>
            <person name="Small I."/>
        </authorList>
    </citation>
    <scope>GENE FAMILY</scope>
</reference>
<name>PP426_ARATH</name>
<keyword id="KW-0150">Chloroplast</keyword>
<keyword id="KW-0934">Plastid</keyword>
<keyword id="KW-1185">Reference proteome</keyword>
<keyword id="KW-0677">Repeat</keyword>
<keyword id="KW-0809">Transit peptide</keyword>
<proteinExistence type="evidence at transcript level"/>
<sequence>MSMASSSLATQSFFSSFPLSHRLHFPVPYLLLRSSFFRKPLSLSATSPSSSSSSPSIFLSCFDDALPDKIQQPENSTINSEESECEEEDDEEGDDFTDPILKFFKSRTLTSESTADPARESKFSLQKNRRTSWHLAPDFADPETEIESKPEESVFVTNQQTLGVHIPFESGVAREILELAKNLKENQTLGEMLSGFERRVSDTECVEALVMMGESGFVKSCLYFYEWMSLQEPSLASPRACSVLFTLLGRERMADYILLLLSNLPDKEEFRDVRLYNAAISGLSASQRYDDAWEVYEAMDKINVYPDNVTCAILITTLRKAGRSAKEVWEIFEKMSEKGVKWSQDVFGGLVKSFCDEGLKEEALVIQTEMEKKGIRSNTIVYNTLMDAYNKSNHIEEVEGLFTEMRDKGLKPSAATYNILMDAYARRMQPDIVETLLREMEDLGLEPNVKSYTCLISAYGRTKKMSDMAADAFLRMKKVGLKPSSHSYTALIHAYSVSGWHEKAYASFEEMCKEGIKPSVETYTSVLDAFRRSGDTGKLMEIWKLMLREKIKGTRITYNTLLDGFAKQGLYIEARDVVSEFSKMGLQPSVMTYNMLMNAYARGGQDAKLPQLLKEMAALNLKPDSITYSTMIYAFVRVRDFKRAFFYHKMMVKSGQVPDPRSYEKLRAILEDKAKTKNRKDKTAILGIINSKFGRVKAKTKGKKDEFWKYKTNRTTSPGRHRS</sequence>
<protein>
    <recommendedName>
        <fullName>Pentatricopeptide repeat-containing protein At5g50280, chloroplastic</fullName>
    </recommendedName>
    <alternativeName>
        <fullName>Protein EMBRYO DEFECTIVE 1006</fullName>
    </alternativeName>
</protein>
<evidence type="ECO:0000255" key="1"/>
<evidence type="ECO:0000256" key="2">
    <source>
        <dbReference type="SAM" id="MobiDB-lite"/>
    </source>
</evidence>
<evidence type="ECO:0000305" key="3"/>
<comment type="subcellular location">
    <subcellularLocation>
        <location evidence="3">Plastid</location>
        <location evidence="3">Chloroplast</location>
    </subcellularLocation>
</comment>
<comment type="similarity">
    <text evidence="3">Belongs to the PPR family. P subfamily.</text>
</comment>
<comment type="online information" name="Pentatricopeptide repeat proteins">
    <link uri="https://ppr.plantenergy.uwa.edu.au"/>
</comment>
<organism>
    <name type="scientific">Arabidopsis thaliana</name>
    <name type="common">Mouse-ear cress</name>
    <dbReference type="NCBI Taxonomy" id="3702"/>
    <lineage>
        <taxon>Eukaryota</taxon>
        <taxon>Viridiplantae</taxon>
        <taxon>Streptophyta</taxon>
        <taxon>Embryophyta</taxon>
        <taxon>Tracheophyta</taxon>
        <taxon>Spermatophyta</taxon>
        <taxon>Magnoliopsida</taxon>
        <taxon>eudicotyledons</taxon>
        <taxon>Gunneridae</taxon>
        <taxon>Pentapetalae</taxon>
        <taxon>rosids</taxon>
        <taxon>malvids</taxon>
        <taxon>Brassicales</taxon>
        <taxon>Brassicaceae</taxon>
        <taxon>Camelineae</taxon>
        <taxon>Arabidopsis</taxon>
    </lineage>
</organism>
<feature type="transit peptide" description="Chloroplast" evidence="1">
    <location>
        <begin position="1"/>
        <end position="44"/>
    </location>
</feature>
<feature type="chain" id="PRO_0000363563" description="Pentatricopeptide repeat-containing protein At5g50280, chloroplastic">
    <location>
        <begin position="45"/>
        <end position="723"/>
    </location>
</feature>
<feature type="repeat" description="PPR 1">
    <location>
        <begin position="272"/>
        <end position="306"/>
    </location>
</feature>
<feature type="repeat" description="PPR 2">
    <location>
        <begin position="307"/>
        <end position="342"/>
    </location>
</feature>
<feature type="repeat" description="PPR 3">
    <location>
        <begin position="343"/>
        <end position="377"/>
    </location>
</feature>
<feature type="repeat" description="PPR 4">
    <location>
        <begin position="378"/>
        <end position="412"/>
    </location>
</feature>
<feature type="repeat" description="PPR 5">
    <location>
        <begin position="413"/>
        <end position="447"/>
    </location>
</feature>
<feature type="repeat" description="PPR 6">
    <location>
        <begin position="448"/>
        <end position="483"/>
    </location>
</feature>
<feature type="repeat" description="PPR 7">
    <location>
        <begin position="484"/>
        <end position="518"/>
    </location>
</feature>
<feature type="repeat" description="PPR 8">
    <location>
        <begin position="519"/>
        <end position="553"/>
    </location>
</feature>
<feature type="repeat" description="PPR 9">
    <location>
        <begin position="554"/>
        <end position="588"/>
    </location>
</feature>
<feature type="repeat" description="PPR 10">
    <location>
        <begin position="589"/>
        <end position="623"/>
    </location>
</feature>
<feature type="repeat" description="PPR 11">
    <location>
        <begin position="624"/>
        <end position="658"/>
    </location>
</feature>
<feature type="region of interest" description="Disordered" evidence="2">
    <location>
        <begin position="70"/>
        <end position="97"/>
    </location>
</feature>
<feature type="region of interest" description="Disordered" evidence="2">
    <location>
        <begin position="700"/>
        <end position="723"/>
    </location>
</feature>
<feature type="compositionally biased region" description="Acidic residues" evidence="2">
    <location>
        <begin position="81"/>
        <end position="97"/>
    </location>
</feature>
<feature type="compositionally biased region" description="Polar residues" evidence="2">
    <location>
        <begin position="713"/>
        <end position="723"/>
    </location>
</feature>
<accession>Q9FGR7</accession>
<gene>
    <name type="primary">EMB1006</name>
    <name type="ordered locus">At5g50280</name>
    <name type="ORF">K6A12.14</name>
</gene>